<proteinExistence type="inferred from homology"/>
<accession>C1F0L6</accession>
<comment type="function">
    <text evidence="1">NDH-1 shuttles electrons from NADH, via FMN and iron-sulfur (Fe-S) centers, to quinones in the respiratory chain. The immediate electron acceptor for the enzyme in this species is believed to be a menaquinone. Couples the redox reaction to proton translocation (for every two electrons transferred, four hydrogen ions are translocated across the cytoplasmic membrane), and thus conserves the redox energy in a proton gradient.</text>
</comment>
<comment type="catalytic activity">
    <reaction evidence="1">
        <text>a quinone + NADH + 5 H(+)(in) = a quinol + NAD(+) + 4 H(+)(out)</text>
        <dbReference type="Rhea" id="RHEA:57888"/>
        <dbReference type="ChEBI" id="CHEBI:15378"/>
        <dbReference type="ChEBI" id="CHEBI:24646"/>
        <dbReference type="ChEBI" id="CHEBI:57540"/>
        <dbReference type="ChEBI" id="CHEBI:57945"/>
        <dbReference type="ChEBI" id="CHEBI:132124"/>
    </reaction>
</comment>
<comment type="subunit">
    <text evidence="1">NDH-1 is composed of 14 different subunits. Subunits NuoA, H, J, K, L, M, N constitute the membrane sector of the complex.</text>
</comment>
<comment type="subcellular location">
    <subcellularLocation>
        <location evidence="1">Cell membrane</location>
        <topology evidence="1">Multi-pass membrane protein</topology>
    </subcellularLocation>
</comment>
<comment type="similarity">
    <text evidence="1">Belongs to the complex I subunit 4L family.</text>
</comment>
<keyword id="KW-1003">Cell membrane</keyword>
<keyword id="KW-0472">Membrane</keyword>
<keyword id="KW-0520">NAD</keyword>
<keyword id="KW-0874">Quinone</keyword>
<keyword id="KW-1278">Translocase</keyword>
<keyword id="KW-0812">Transmembrane</keyword>
<keyword id="KW-1133">Transmembrane helix</keyword>
<keyword id="KW-0813">Transport</keyword>
<reference key="1">
    <citation type="submission" date="2009-02" db="EMBL/GenBank/DDBJ databases">
        <title>Genome sequence of Bacillus cereus 03BB102.</title>
        <authorList>
            <person name="Dodson R.J."/>
            <person name="Jackson P."/>
            <person name="Munk A.C."/>
            <person name="Brettin T."/>
            <person name="Bruce D."/>
            <person name="Detter C."/>
            <person name="Tapia R."/>
            <person name="Han C."/>
            <person name="Sutton G."/>
            <person name="Sims D."/>
        </authorList>
    </citation>
    <scope>NUCLEOTIDE SEQUENCE [LARGE SCALE GENOMIC DNA]</scope>
    <source>
        <strain>03BB102</strain>
    </source>
</reference>
<feature type="chain" id="PRO_0000389940" description="NADH-quinone oxidoreductase subunit K">
    <location>
        <begin position="1"/>
        <end position="104"/>
    </location>
</feature>
<feature type="transmembrane region" description="Helical" evidence="1">
    <location>
        <begin position="4"/>
        <end position="24"/>
    </location>
</feature>
<feature type="transmembrane region" description="Helical" evidence="1">
    <location>
        <begin position="31"/>
        <end position="51"/>
    </location>
</feature>
<feature type="transmembrane region" description="Helical" evidence="1">
    <location>
        <begin position="67"/>
        <end position="87"/>
    </location>
</feature>
<organism>
    <name type="scientific">Bacillus cereus (strain 03BB102)</name>
    <dbReference type="NCBI Taxonomy" id="572264"/>
    <lineage>
        <taxon>Bacteria</taxon>
        <taxon>Bacillati</taxon>
        <taxon>Bacillota</taxon>
        <taxon>Bacilli</taxon>
        <taxon>Bacillales</taxon>
        <taxon>Bacillaceae</taxon>
        <taxon>Bacillus</taxon>
        <taxon>Bacillus cereus group</taxon>
    </lineage>
</organism>
<sequence>MSSVPASAYLTLAIILFCIGLFGALTKRNTVIVLVCIELMLNAANLNLVAFSKLGLFPNLTGQIFSLFTMAVAAAEAAVGLAILIALYRNRTTVHVDEMDTLKG</sequence>
<protein>
    <recommendedName>
        <fullName evidence="1">NADH-quinone oxidoreductase subunit K</fullName>
        <ecNumber evidence="1">7.1.1.-</ecNumber>
    </recommendedName>
    <alternativeName>
        <fullName evidence="1">NADH dehydrogenase I subunit K</fullName>
    </alternativeName>
    <alternativeName>
        <fullName evidence="1">NDH-1 subunit K</fullName>
    </alternativeName>
</protein>
<gene>
    <name evidence="1" type="primary">nuoK</name>
    <name type="ordered locus">BCA_5438</name>
</gene>
<evidence type="ECO:0000255" key="1">
    <source>
        <dbReference type="HAMAP-Rule" id="MF_01456"/>
    </source>
</evidence>
<name>NUOK_BACC3</name>
<dbReference type="EC" id="7.1.1.-" evidence="1"/>
<dbReference type="EMBL" id="CP001407">
    <property type="protein sequence ID" value="ACO26848.1"/>
    <property type="molecule type" value="Genomic_DNA"/>
</dbReference>
<dbReference type="RefSeq" id="WP_000100078.1">
    <property type="nucleotide sequence ID" value="NZ_CP009318.1"/>
</dbReference>
<dbReference type="SMR" id="C1F0L6"/>
<dbReference type="GeneID" id="92803549"/>
<dbReference type="KEGG" id="bcx:BCA_5438"/>
<dbReference type="PATRIC" id="fig|572264.18.peg.5360"/>
<dbReference type="Proteomes" id="UP000002210">
    <property type="component" value="Chromosome"/>
</dbReference>
<dbReference type="GO" id="GO:0030964">
    <property type="term" value="C:NADH dehydrogenase complex"/>
    <property type="evidence" value="ECO:0007669"/>
    <property type="project" value="TreeGrafter"/>
</dbReference>
<dbReference type="GO" id="GO:0005886">
    <property type="term" value="C:plasma membrane"/>
    <property type="evidence" value="ECO:0007669"/>
    <property type="project" value="UniProtKB-SubCell"/>
</dbReference>
<dbReference type="GO" id="GO:0050136">
    <property type="term" value="F:NADH:ubiquinone reductase (non-electrogenic) activity"/>
    <property type="evidence" value="ECO:0007669"/>
    <property type="project" value="UniProtKB-UniRule"/>
</dbReference>
<dbReference type="GO" id="GO:0048038">
    <property type="term" value="F:quinone binding"/>
    <property type="evidence" value="ECO:0007669"/>
    <property type="project" value="UniProtKB-KW"/>
</dbReference>
<dbReference type="GO" id="GO:0042773">
    <property type="term" value="P:ATP synthesis coupled electron transport"/>
    <property type="evidence" value="ECO:0007669"/>
    <property type="project" value="InterPro"/>
</dbReference>
<dbReference type="FunFam" id="1.10.287.3510:FF:000001">
    <property type="entry name" value="NADH-quinone oxidoreductase subunit K"/>
    <property type="match status" value="1"/>
</dbReference>
<dbReference type="Gene3D" id="1.10.287.3510">
    <property type="match status" value="1"/>
</dbReference>
<dbReference type="HAMAP" id="MF_01456">
    <property type="entry name" value="NDH1_NuoK"/>
    <property type="match status" value="1"/>
</dbReference>
<dbReference type="InterPro" id="IPR001133">
    <property type="entry name" value="NADH_UbQ_OxRdtase_chain4L/K"/>
</dbReference>
<dbReference type="InterPro" id="IPR039428">
    <property type="entry name" value="NUOK/Mnh_C1-like"/>
</dbReference>
<dbReference type="NCBIfam" id="NF004320">
    <property type="entry name" value="PRK05715.1-2"/>
    <property type="match status" value="1"/>
</dbReference>
<dbReference type="NCBIfam" id="NF004321">
    <property type="entry name" value="PRK05715.1-3"/>
    <property type="match status" value="1"/>
</dbReference>
<dbReference type="NCBIfam" id="NF004322">
    <property type="entry name" value="PRK05715.1-4"/>
    <property type="match status" value="1"/>
</dbReference>
<dbReference type="NCBIfam" id="NF004323">
    <property type="entry name" value="PRK05715.1-5"/>
    <property type="match status" value="1"/>
</dbReference>
<dbReference type="PANTHER" id="PTHR11434:SF16">
    <property type="entry name" value="NADH-UBIQUINONE OXIDOREDUCTASE CHAIN 4L"/>
    <property type="match status" value="1"/>
</dbReference>
<dbReference type="PANTHER" id="PTHR11434">
    <property type="entry name" value="NADH-UBIQUINONE OXIDOREDUCTASE SUBUNIT ND4L"/>
    <property type="match status" value="1"/>
</dbReference>
<dbReference type="Pfam" id="PF00420">
    <property type="entry name" value="Oxidored_q2"/>
    <property type="match status" value="1"/>
</dbReference>